<name>RSMG_SYNAS</name>
<proteinExistence type="inferred from homology"/>
<gene>
    <name evidence="1" type="primary">rsmG</name>
    <name type="ordered locus">SYNAS_31670</name>
    <name type="ORF">SYN_02054</name>
</gene>
<accession>Q2LY85</accession>
<dbReference type="EC" id="2.1.1.170" evidence="1"/>
<dbReference type="EMBL" id="CP000252">
    <property type="protein sequence ID" value="ABC79046.1"/>
    <property type="molecule type" value="Genomic_DNA"/>
</dbReference>
<dbReference type="SMR" id="Q2LY85"/>
<dbReference type="FunCoup" id="Q2LY85">
    <property type="interactions" value="457"/>
</dbReference>
<dbReference type="STRING" id="56780.SYN_02054"/>
<dbReference type="KEGG" id="sat:SYN_02054"/>
<dbReference type="eggNOG" id="COG0357">
    <property type="taxonomic scope" value="Bacteria"/>
</dbReference>
<dbReference type="HOGENOM" id="CLU_065341_0_0_7"/>
<dbReference type="InParanoid" id="Q2LY85"/>
<dbReference type="Proteomes" id="UP000001933">
    <property type="component" value="Chromosome"/>
</dbReference>
<dbReference type="GO" id="GO:0005829">
    <property type="term" value="C:cytosol"/>
    <property type="evidence" value="ECO:0007669"/>
    <property type="project" value="TreeGrafter"/>
</dbReference>
<dbReference type="GO" id="GO:0070043">
    <property type="term" value="F:rRNA (guanine-N7-)-methyltransferase activity"/>
    <property type="evidence" value="ECO:0007669"/>
    <property type="project" value="UniProtKB-UniRule"/>
</dbReference>
<dbReference type="CDD" id="cd02440">
    <property type="entry name" value="AdoMet_MTases"/>
    <property type="match status" value="1"/>
</dbReference>
<dbReference type="Gene3D" id="3.40.50.150">
    <property type="entry name" value="Vaccinia Virus protein VP39"/>
    <property type="match status" value="1"/>
</dbReference>
<dbReference type="HAMAP" id="MF_00074">
    <property type="entry name" value="16SrRNA_methyltr_G"/>
    <property type="match status" value="1"/>
</dbReference>
<dbReference type="InterPro" id="IPR003682">
    <property type="entry name" value="rRNA_ssu_MeTfrase_G"/>
</dbReference>
<dbReference type="InterPro" id="IPR029063">
    <property type="entry name" value="SAM-dependent_MTases_sf"/>
</dbReference>
<dbReference type="NCBIfam" id="TIGR00138">
    <property type="entry name" value="rsmG_gidB"/>
    <property type="match status" value="1"/>
</dbReference>
<dbReference type="PANTHER" id="PTHR31760">
    <property type="entry name" value="S-ADENOSYL-L-METHIONINE-DEPENDENT METHYLTRANSFERASES SUPERFAMILY PROTEIN"/>
    <property type="match status" value="1"/>
</dbReference>
<dbReference type="PANTHER" id="PTHR31760:SF0">
    <property type="entry name" value="S-ADENOSYL-L-METHIONINE-DEPENDENT METHYLTRANSFERASES SUPERFAMILY PROTEIN"/>
    <property type="match status" value="1"/>
</dbReference>
<dbReference type="Pfam" id="PF02527">
    <property type="entry name" value="GidB"/>
    <property type="match status" value="1"/>
</dbReference>
<dbReference type="PIRSF" id="PIRSF003078">
    <property type="entry name" value="GidB"/>
    <property type="match status" value="1"/>
</dbReference>
<dbReference type="SUPFAM" id="SSF53335">
    <property type="entry name" value="S-adenosyl-L-methionine-dependent methyltransferases"/>
    <property type="match status" value="1"/>
</dbReference>
<protein>
    <recommendedName>
        <fullName evidence="1">Ribosomal RNA small subunit methyltransferase G</fullName>
        <ecNumber evidence="1">2.1.1.170</ecNumber>
    </recommendedName>
    <alternativeName>
        <fullName evidence="1">16S rRNA 7-methylguanosine methyltransferase</fullName>
        <shortName evidence="1">16S rRNA m7G methyltransferase</shortName>
    </alternativeName>
</protein>
<reference key="1">
    <citation type="journal article" date="2007" name="Proc. Natl. Acad. Sci. U.S.A.">
        <title>The genome of Syntrophus aciditrophicus: life at the thermodynamic limit of microbial growth.</title>
        <authorList>
            <person name="McInerney M.J."/>
            <person name="Rohlin L."/>
            <person name="Mouttaki H."/>
            <person name="Kim U."/>
            <person name="Krupp R.S."/>
            <person name="Rios-Hernandez L."/>
            <person name="Sieber J."/>
            <person name="Struchtemeyer C.G."/>
            <person name="Bhattacharyya A."/>
            <person name="Campbell J.W."/>
            <person name="Gunsalus R.P."/>
        </authorList>
    </citation>
    <scope>NUCLEOTIDE SEQUENCE [LARGE SCALE GENOMIC DNA]</scope>
    <source>
        <strain>SB</strain>
    </source>
</reference>
<organism>
    <name type="scientific">Syntrophus aciditrophicus (strain SB)</name>
    <dbReference type="NCBI Taxonomy" id="56780"/>
    <lineage>
        <taxon>Bacteria</taxon>
        <taxon>Pseudomonadati</taxon>
        <taxon>Thermodesulfobacteriota</taxon>
        <taxon>Syntrophia</taxon>
        <taxon>Syntrophales</taxon>
        <taxon>Syntrophaceae</taxon>
        <taxon>Syntrophus</taxon>
    </lineage>
</organism>
<evidence type="ECO:0000255" key="1">
    <source>
        <dbReference type="HAMAP-Rule" id="MF_00074"/>
    </source>
</evidence>
<comment type="function">
    <text evidence="1">Specifically methylates the N7 position of guanine in position 527 of 16S rRNA.</text>
</comment>
<comment type="catalytic activity">
    <reaction evidence="1">
        <text>guanosine(527) in 16S rRNA + S-adenosyl-L-methionine = N(7)-methylguanosine(527) in 16S rRNA + S-adenosyl-L-homocysteine</text>
        <dbReference type="Rhea" id="RHEA:42732"/>
        <dbReference type="Rhea" id="RHEA-COMP:10209"/>
        <dbReference type="Rhea" id="RHEA-COMP:10210"/>
        <dbReference type="ChEBI" id="CHEBI:57856"/>
        <dbReference type="ChEBI" id="CHEBI:59789"/>
        <dbReference type="ChEBI" id="CHEBI:74269"/>
        <dbReference type="ChEBI" id="CHEBI:74480"/>
        <dbReference type="EC" id="2.1.1.170"/>
    </reaction>
</comment>
<comment type="subcellular location">
    <subcellularLocation>
        <location evidence="1">Cytoplasm</location>
    </subcellularLocation>
</comment>
<comment type="similarity">
    <text evidence="1">Belongs to the methyltransferase superfamily. RNA methyltransferase RsmG family.</text>
</comment>
<sequence length="241" mass="27379">MIRLLNNFNFSEIDNADPAQWCRLFQEAAAEFDVLLSDAQLNRFLMYYRELKFWNSRINLIASAESVTDIVIKHFLDSLTLIPCIPFPDGRLIDIGTGGGFPGIPLKIALNSLKVTLLEASRKKVSFLKSLRRVLNLQDMKILNERVEDLITQAPCPNRFDMVVSRAALKLPEYLRFGKELVSSHGVIIAMKGANYQHELEDVNDILEEYGIFLAEVRSLALPCTGDFRAILIFRKSLSRT</sequence>
<feature type="chain" id="PRO_0000335441" description="Ribosomal RNA small subunit methyltransferase G">
    <location>
        <begin position="1"/>
        <end position="241"/>
    </location>
</feature>
<feature type="binding site" evidence="1">
    <location>
        <position position="96"/>
    </location>
    <ligand>
        <name>S-adenosyl-L-methionine</name>
        <dbReference type="ChEBI" id="CHEBI:59789"/>
    </ligand>
</feature>
<feature type="binding site" evidence="1">
    <location>
        <position position="101"/>
    </location>
    <ligand>
        <name>S-adenosyl-L-methionine</name>
        <dbReference type="ChEBI" id="CHEBI:59789"/>
    </ligand>
</feature>
<feature type="binding site" evidence="1">
    <location>
        <begin position="119"/>
        <end position="121"/>
    </location>
    <ligand>
        <name>S-adenosyl-L-methionine</name>
        <dbReference type="ChEBI" id="CHEBI:59789"/>
    </ligand>
</feature>
<feature type="binding site" evidence="1">
    <location>
        <begin position="147"/>
        <end position="148"/>
    </location>
    <ligand>
        <name>S-adenosyl-L-methionine</name>
        <dbReference type="ChEBI" id="CHEBI:59789"/>
    </ligand>
</feature>
<feature type="binding site" evidence="1">
    <location>
        <position position="166"/>
    </location>
    <ligand>
        <name>S-adenosyl-L-methionine</name>
        <dbReference type="ChEBI" id="CHEBI:59789"/>
    </ligand>
</feature>
<keyword id="KW-0963">Cytoplasm</keyword>
<keyword id="KW-0489">Methyltransferase</keyword>
<keyword id="KW-1185">Reference proteome</keyword>
<keyword id="KW-0698">rRNA processing</keyword>
<keyword id="KW-0949">S-adenosyl-L-methionine</keyword>
<keyword id="KW-0808">Transferase</keyword>